<name>CYC_THEPA</name>
<feature type="chain" id="PRO_0000273193" description="Cytochrome c">
    <location>
        <begin position="1"/>
        <end position="115"/>
    </location>
</feature>
<feature type="binding site" description="covalent" evidence="2">
    <location>
        <position position="26"/>
    </location>
    <ligand>
        <name>heme c</name>
        <dbReference type="ChEBI" id="CHEBI:61717"/>
    </ligand>
</feature>
<feature type="binding site" description="covalent" evidence="2">
    <location>
        <position position="29"/>
    </location>
    <ligand>
        <name>heme c</name>
        <dbReference type="ChEBI" id="CHEBI:61717"/>
    </ligand>
</feature>
<feature type="binding site" description="axial binding residue" evidence="2">
    <location>
        <position position="30"/>
    </location>
    <ligand>
        <name>heme c</name>
        <dbReference type="ChEBI" id="CHEBI:61717"/>
    </ligand>
    <ligandPart>
        <name>Fe</name>
        <dbReference type="ChEBI" id="CHEBI:18248"/>
    </ligandPart>
</feature>
<feature type="binding site" description="axial binding residue" evidence="2">
    <location>
        <position position="91"/>
    </location>
    <ligand>
        <name>heme c</name>
        <dbReference type="ChEBI" id="CHEBI:61717"/>
    </ligand>
    <ligandPart>
        <name>Fe</name>
        <dbReference type="ChEBI" id="CHEBI:18248"/>
    </ligandPart>
</feature>
<evidence type="ECO:0000250" key="1"/>
<evidence type="ECO:0000255" key="2">
    <source>
        <dbReference type="PROSITE-ProRule" id="PRU00433"/>
    </source>
</evidence>
<evidence type="ECO:0000305" key="3"/>
<reference key="1">
    <citation type="journal article" date="2005" name="Science">
        <title>Genome sequence of Theileria parva, a bovine pathogen that transforms lymphocytes.</title>
        <authorList>
            <person name="Gardner M.J."/>
            <person name="Bishop R."/>
            <person name="Shah T."/>
            <person name="de Villiers E.P."/>
            <person name="Carlton J.M."/>
            <person name="Hall N."/>
            <person name="Ren Q."/>
            <person name="Paulsen I.T."/>
            <person name="Pain A."/>
            <person name="Berriman M."/>
            <person name="Wilson R.J.M."/>
            <person name="Sato S."/>
            <person name="Ralph S.A."/>
            <person name="Mann D.J."/>
            <person name="Xiong Z."/>
            <person name="Shallom S.J."/>
            <person name="Weidman J."/>
            <person name="Jiang L."/>
            <person name="Lynn J."/>
            <person name="Weaver B."/>
            <person name="Shoaibi A."/>
            <person name="Domingo A.R."/>
            <person name="Wasawo D."/>
            <person name="Crabtree J."/>
            <person name="Wortman J.R."/>
            <person name="Haas B."/>
            <person name="Angiuoli S.V."/>
            <person name="Creasy T.H."/>
            <person name="Lu C."/>
            <person name="Suh B."/>
            <person name="Silva J.C."/>
            <person name="Utterback T.R."/>
            <person name="Feldblyum T.V."/>
            <person name="Pertea M."/>
            <person name="Allen J."/>
            <person name="Nierman W.C."/>
            <person name="Taracha E.L.N."/>
            <person name="Salzberg S.L."/>
            <person name="White O.R."/>
            <person name="Fitzhugh H.A."/>
            <person name="Morzaria S."/>
            <person name="Venter J.C."/>
            <person name="Fraser C.M."/>
            <person name="Nene V."/>
        </authorList>
    </citation>
    <scope>NUCLEOTIDE SEQUENCE [LARGE SCALE GENOMIC DNA]</scope>
    <source>
        <strain>Muguga</strain>
    </source>
</reference>
<keyword id="KW-0249">Electron transport</keyword>
<keyword id="KW-0349">Heme</keyword>
<keyword id="KW-0408">Iron</keyword>
<keyword id="KW-0479">Metal-binding</keyword>
<keyword id="KW-0496">Mitochondrion</keyword>
<keyword id="KW-1185">Reference proteome</keyword>
<keyword id="KW-0679">Respiratory chain</keyword>
<keyword id="KW-0813">Transport</keyword>
<gene>
    <name type="ordered locus">TP02_0396</name>
</gene>
<protein>
    <recommendedName>
        <fullName>Cytochrome c</fullName>
    </recommendedName>
</protein>
<dbReference type="EMBL" id="AAGK01000002">
    <property type="protein sequence ID" value="EAN32679.1"/>
    <property type="molecule type" value="Genomic_DNA"/>
</dbReference>
<dbReference type="RefSeq" id="XP_764962.1">
    <property type="nucleotide sequence ID" value="XM_759869.1"/>
</dbReference>
<dbReference type="SMR" id="Q4N594"/>
<dbReference type="FunCoup" id="Q4N594">
    <property type="interactions" value="152"/>
</dbReference>
<dbReference type="STRING" id="5875.Q4N594"/>
<dbReference type="EnsemblProtists" id="EAN32679">
    <property type="protein sequence ID" value="EAN32679"/>
    <property type="gene ID" value="TP02_0396"/>
</dbReference>
<dbReference type="GeneID" id="3502047"/>
<dbReference type="KEGG" id="tpv:TP02_0396"/>
<dbReference type="VEuPathDB" id="PiroplasmaDB:TpMuguga_02g00396"/>
<dbReference type="eggNOG" id="KOG3453">
    <property type="taxonomic scope" value="Eukaryota"/>
</dbReference>
<dbReference type="InParanoid" id="Q4N594"/>
<dbReference type="OMA" id="KARCAQC"/>
<dbReference type="Proteomes" id="UP000001949">
    <property type="component" value="Unassembled WGS sequence"/>
</dbReference>
<dbReference type="GO" id="GO:0005758">
    <property type="term" value="C:mitochondrial intermembrane space"/>
    <property type="evidence" value="ECO:0007669"/>
    <property type="project" value="UniProtKB-SubCell"/>
</dbReference>
<dbReference type="GO" id="GO:0009055">
    <property type="term" value="F:electron transfer activity"/>
    <property type="evidence" value="ECO:0007669"/>
    <property type="project" value="InterPro"/>
</dbReference>
<dbReference type="GO" id="GO:0020037">
    <property type="term" value="F:heme binding"/>
    <property type="evidence" value="ECO:0007669"/>
    <property type="project" value="InterPro"/>
</dbReference>
<dbReference type="GO" id="GO:0046872">
    <property type="term" value="F:metal ion binding"/>
    <property type="evidence" value="ECO:0007669"/>
    <property type="project" value="UniProtKB-KW"/>
</dbReference>
<dbReference type="FunFam" id="1.10.760.10:FF:000001">
    <property type="entry name" value="Cytochrome c iso-1"/>
    <property type="match status" value="1"/>
</dbReference>
<dbReference type="Gene3D" id="1.10.760.10">
    <property type="entry name" value="Cytochrome c-like domain"/>
    <property type="match status" value="1"/>
</dbReference>
<dbReference type="InterPro" id="IPR009056">
    <property type="entry name" value="Cyt_c-like_dom"/>
</dbReference>
<dbReference type="InterPro" id="IPR036909">
    <property type="entry name" value="Cyt_c-like_dom_sf"/>
</dbReference>
<dbReference type="InterPro" id="IPR002327">
    <property type="entry name" value="Cyt_c_1A/1B"/>
</dbReference>
<dbReference type="PANTHER" id="PTHR11961">
    <property type="entry name" value="CYTOCHROME C"/>
    <property type="match status" value="1"/>
</dbReference>
<dbReference type="Pfam" id="PF00034">
    <property type="entry name" value="Cytochrom_C"/>
    <property type="match status" value="1"/>
</dbReference>
<dbReference type="PRINTS" id="PR00604">
    <property type="entry name" value="CYTCHRMECIAB"/>
</dbReference>
<dbReference type="SUPFAM" id="SSF46626">
    <property type="entry name" value="Cytochrome c"/>
    <property type="match status" value="1"/>
</dbReference>
<dbReference type="PROSITE" id="PS51007">
    <property type="entry name" value="CYTC"/>
    <property type="match status" value="1"/>
</dbReference>
<organism>
    <name type="scientific">Theileria parva</name>
    <name type="common">East coast fever infection agent</name>
    <dbReference type="NCBI Taxonomy" id="5875"/>
    <lineage>
        <taxon>Eukaryota</taxon>
        <taxon>Sar</taxon>
        <taxon>Alveolata</taxon>
        <taxon>Apicomplexa</taxon>
        <taxon>Aconoidasida</taxon>
        <taxon>Piroplasmida</taxon>
        <taxon>Theileriidae</taxon>
        <taxon>Theileria</taxon>
    </lineage>
</organism>
<accession>Q4N594</accession>
<sequence>MAKPEPDVVIPEGDSSKGAKLFKSKCAQCHTINKGGSVKQGPNLYGFYGRKSGASDYAYSDANKNSGIVWSDKHLFVYLVNPKQYIPGTKMVFAGLKKEQDRADLIAYLKEASSK</sequence>
<proteinExistence type="inferred from homology"/>
<comment type="function">
    <text evidence="1">Electron carrier protein. The oxidized form of the cytochrome c heme group can accept an electron from the heme group of the cytochrome c1 subunit of cytochrome reductase. Cytochrome c then transfers this electron to the cytochrome oxidase complex, the final protein carrier in the mitochondrial electron-transport chain (By similarity).</text>
</comment>
<comment type="subcellular location">
    <subcellularLocation>
        <location evidence="1">Mitochondrion intermembrane space</location>
    </subcellularLocation>
    <text evidence="1">Loosely associated with the inner membrane.</text>
</comment>
<comment type="PTM">
    <text evidence="1">Binds 1 heme c group covalently per subunit.</text>
</comment>
<comment type="similarity">
    <text evidence="3">Belongs to the cytochrome c family.</text>
</comment>
<comment type="online information" name="Protein Spotlight">
    <link uri="https://www.proteinspotlight.org/back_issues/076"/>
    <text>Life shuttle - Issue 76 of November 2006</text>
</comment>